<organism>
    <name type="scientific">Blastochloris viridis</name>
    <name type="common">Rhodopseudomonas viridis</name>
    <dbReference type="NCBI Taxonomy" id="1079"/>
    <lineage>
        <taxon>Bacteria</taxon>
        <taxon>Pseudomonadati</taxon>
        <taxon>Pseudomonadota</taxon>
        <taxon>Alphaproteobacteria</taxon>
        <taxon>Hyphomicrobiales</taxon>
        <taxon>Blastochloridaceae</taxon>
        <taxon>Blastochloris</taxon>
    </lineage>
</organism>
<protein>
    <recommendedName>
        <fullName>Uncharacterized protein in pufB 5'region</fullName>
    </recommendedName>
</protein>
<accession>P20467</accession>
<sequence>LQAPIGLHSTTAFLRALGELTGLDPEPFIEREKRTTIRPLWDLWRSMTQDFFGTSSFGIAANETYTRGLRHFLEEEMGLLCSFAFSRKPGVKPDNGAVRQAIQTSMPLIVFGRYNERMYLAEVGSRAIFIPASFPGAIVRRYTGTPVMGYAGATYVVQEVCNALYDALFNILPLGTELDKVEATPARRHKEMPWNDDARAALDDSVEALPVLIRTSAVKRLRDAAEREARAVGEERVTVACVARARAALVGGQAA</sequence>
<proteinExistence type="predicted"/>
<reference key="1">
    <citation type="journal article" date="1990" name="J. Bacteriol.">
        <title>Structure and transcription of the genes encoding the B1015 light-harvesting complex beta and alpha subunits and the photosynthetic reaction center L, M, and cytochrome c subunits from Rhodopseudomonas viridis.</title>
        <authorList>
            <person name="Wiessner C."/>
            <person name="Dunger I."/>
            <person name="Michel H."/>
        </authorList>
    </citation>
    <scope>NUCLEOTIDE SEQUENCE [GENOMIC DNA]</scope>
</reference>
<dbReference type="EMBL" id="M55261">
    <property type="protein sequence ID" value="AAA64254.1"/>
    <property type="molecule type" value="Genomic_DNA"/>
</dbReference>
<dbReference type="PIR" id="A35382">
    <property type="entry name" value="A35382"/>
</dbReference>
<dbReference type="SMR" id="P20467"/>
<dbReference type="STRING" id="1079.BVIR_601"/>
<dbReference type="GO" id="GO:0016491">
    <property type="term" value="F:oxidoreductase activity"/>
    <property type="evidence" value="ECO:0007669"/>
    <property type="project" value="InterPro"/>
</dbReference>
<dbReference type="GO" id="GO:0015995">
    <property type="term" value="P:chlorophyll biosynthetic process"/>
    <property type="evidence" value="ECO:0007669"/>
    <property type="project" value="InterPro"/>
</dbReference>
<dbReference type="GO" id="GO:0015979">
    <property type="term" value="P:photosynthesis"/>
    <property type="evidence" value="ECO:0007669"/>
    <property type="project" value="InterPro"/>
</dbReference>
<dbReference type="InterPro" id="IPR050152">
    <property type="entry name" value="ChlB/BchB/BchZ"/>
</dbReference>
<dbReference type="InterPro" id="IPR013580">
    <property type="entry name" value="LI-POR_suB-like_C"/>
</dbReference>
<dbReference type="InterPro" id="IPR000510">
    <property type="entry name" value="Nase/OxRdtase_comp1"/>
</dbReference>
<dbReference type="PANTHER" id="PTHR33712">
    <property type="entry name" value="LIGHT-INDEPENDENT PROTOCHLOROPHYLLIDE REDUCTASE SUBUNIT B"/>
    <property type="match status" value="1"/>
</dbReference>
<dbReference type="PANTHER" id="PTHR33712:SF7">
    <property type="entry name" value="LIGHT-INDEPENDENT PROTOCHLOROPHYLLIDE REDUCTASE SUBUNIT B"/>
    <property type="match status" value="1"/>
</dbReference>
<dbReference type="Pfam" id="PF00148">
    <property type="entry name" value="Oxidored_nitro"/>
    <property type="match status" value="1"/>
</dbReference>
<dbReference type="Pfam" id="PF08369">
    <property type="entry name" value="PCP_red"/>
    <property type="match status" value="1"/>
</dbReference>
<dbReference type="SUPFAM" id="SSF53807">
    <property type="entry name" value="Helical backbone' metal receptor"/>
    <property type="match status" value="1"/>
</dbReference>
<feature type="chain" id="PRO_0000066425" description="Uncharacterized protein in pufB 5'region">
    <location>
        <begin position="1" status="less than"/>
        <end position="255"/>
    </location>
</feature>
<feature type="non-terminal residue">
    <location>
        <position position="1"/>
    </location>
</feature>
<name>YPUB_BLAVI</name>